<protein>
    <recommendedName>
        <fullName evidence="1">Nucleotide-binding protein lhv_0732</fullName>
    </recommendedName>
</protein>
<keyword id="KW-0067">ATP-binding</keyword>
<keyword id="KW-0342">GTP-binding</keyword>
<keyword id="KW-0547">Nucleotide-binding</keyword>
<comment type="function">
    <text evidence="1">Displays ATPase and GTPase activities.</text>
</comment>
<comment type="similarity">
    <text evidence="1">Belongs to the RapZ-like family.</text>
</comment>
<organism>
    <name type="scientific">Lactobacillus helveticus (strain DPC 4571)</name>
    <dbReference type="NCBI Taxonomy" id="405566"/>
    <lineage>
        <taxon>Bacteria</taxon>
        <taxon>Bacillati</taxon>
        <taxon>Bacillota</taxon>
        <taxon>Bacilli</taxon>
        <taxon>Lactobacillales</taxon>
        <taxon>Lactobacillaceae</taxon>
        <taxon>Lactobacillus</taxon>
    </lineage>
</organism>
<name>Y732_LACH4</name>
<feature type="chain" id="PRO_1000072676" description="Nucleotide-binding protein lhv_0732">
    <location>
        <begin position="1"/>
        <end position="291"/>
    </location>
</feature>
<feature type="binding site" evidence="1">
    <location>
        <begin position="13"/>
        <end position="20"/>
    </location>
    <ligand>
        <name>ATP</name>
        <dbReference type="ChEBI" id="CHEBI:30616"/>
    </ligand>
</feature>
<feature type="binding site" evidence="1">
    <location>
        <begin position="61"/>
        <end position="64"/>
    </location>
    <ligand>
        <name>GTP</name>
        <dbReference type="ChEBI" id="CHEBI:37565"/>
    </ligand>
</feature>
<proteinExistence type="inferred from homology"/>
<dbReference type="EMBL" id="CP000517">
    <property type="protein sequence ID" value="ABX26874.1"/>
    <property type="molecule type" value="Genomic_DNA"/>
</dbReference>
<dbReference type="SMR" id="A8YUD6"/>
<dbReference type="KEGG" id="lhe:lhv_0732"/>
<dbReference type="eggNOG" id="COG1660">
    <property type="taxonomic scope" value="Bacteria"/>
</dbReference>
<dbReference type="HOGENOM" id="CLU_059558_0_0_9"/>
<dbReference type="Proteomes" id="UP000000790">
    <property type="component" value="Chromosome"/>
</dbReference>
<dbReference type="GO" id="GO:0005524">
    <property type="term" value="F:ATP binding"/>
    <property type="evidence" value="ECO:0007669"/>
    <property type="project" value="UniProtKB-UniRule"/>
</dbReference>
<dbReference type="GO" id="GO:0005525">
    <property type="term" value="F:GTP binding"/>
    <property type="evidence" value="ECO:0007669"/>
    <property type="project" value="UniProtKB-UniRule"/>
</dbReference>
<dbReference type="Gene3D" id="3.40.50.300">
    <property type="entry name" value="P-loop containing nucleotide triphosphate hydrolases"/>
    <property type="match status" value="1"/>
</dbReference>
<dbReference type="HAMAP" id="MF_00636">
    <property type="entry name" value="RapZ_like"/>
    <property type="match status" value="1"/>
</dbReference>
<dbReference type="InterPro" id="IPR027417">
    <property type="entry name" value="P-loop_NTPase"/>
</dbReference>
<dbReference type="InterPro" id="IPR005337">
    <property type="entry name" value="RapZ-like"/>
</dbReference>
<dbReference type="InterPro" id="IPR053930">
    <property type="entry name" value="RapZ-like_N"/>
</dbReference>
<dbReference type="InterPro" id="IPR053931">
    <property type="entry name" value="RapZ_C"/>
</dbReference>
<dbReference type="NCBIfam" id="NF003828">
    <property type="entry name" value="PRK05416.1"/>
    <property type="match status" value="1"/>
</dbReference>
<dbReference type="PANTHER" id="PTHR30448">
    <property type="entry name" value="RNASE ADAPTER PROTEIN RAPZ"/>
    <property type="match status" value="1"/>
</dbReference>
<dbReference type="PANTHER" id="PTHR30448:SF0">
    <property type="entry name" value="RNASE ADAPTER PROTEIN RAPZ"/>
    <property type="match status" value="1"/>
</dbReference>
<dbReference type="Pfam" id="PF22740">
    <property type="entry name" value="PapZ_C"/>
    <property type="match status" value="1"/>
</dbReference>
<dbReference type="Pfam" id="PF03668">
    <property type="entry name" value="RapZ-like_N"/>
    <property type="match status" value="1"/>
</dbReference>
<dbReference type="PIRSF" id="PIRSF005052">
    <property type="entry name" value="P-loopkin"/>
    <property type="match status" value="1"/>
</dbReference>
<dbReference type="SUPFAM" id="SSF52540">
    <property type="entry name" value="P-loop containing nucleoside triphosphate hydrolases"/>
    <property type="match status" value="1"/>
</dbReference>
<accession>A8YUD6</accession>
<gene>
    <name type="ordered locus">lhv_0732</name>
</gene>
<sequence>MADDKKQLLIVTGMSGAGKTVVAHDLEDMGYFVVDNLPPTLLGSFWDYNSNDFHKVAVVIDLRVKTFYTDLLDEVNSLEDNGNVQATILFLDASDDVLVARYKETRRLPPLANNGKGRLLDGIQEERRILMPIKNRSNYIINTSNLSTKDLKQKLINTFSDRKRQPFSIEVMSFGFKYGMPIDADIVMDVRFLPNPFYIPELRPFTGLDKRVFDYVMNKKETQVFYQKLLDLLETAIPGYIKEGKEKLTIAIGCTGGQHRSVSIAQQLARDLSKKYPVDITHREVSRYIRK</sequence>
<reference key="1">
    <citation type="journal article" date="2008" name="J. Bacteriol.">
        <title>Genome sequence of Lactobacillus helveticus: an organism distinguished by selective gene loss and IS element expansion.</title>
        <authorList>
            <person name="Callanan M."/>
            <person name="Kaleta P."/>
            <person name="O'Callaghan J."/>
            <person name="O'Sullivan O."/>
            <person name="Jordan K."/>
            <person name="McAuliffe O."/>
            <person name="Sangrador-Vegas A."/>
            <person name="Slattery L."/>
            <person name="Fitzgerald G.F."/>
            <person name="Beresford T."/>
            <person name="Ross R.P."/>
        </authorList>
    </citation>
    <scope>NUCLEOTIDE SEQUENCE [LARGE SCALE GENOMIC DNA]</scope>
    <source>
        <strain>DPC 4571</strain>
    </source>
</reference>
<evidence type="ECO:0000255" key="1">
    <source>
        <dbReference type="HAMAP-Rule" id="MF_00636"/>
    </source>
</evidence>